<accession>Q7A1Y7</accession>
<proteinExistence type="inferred from homology"/>
<keyword id="KW-0520">NAD</keyword>
<keyword id="KW-0560">Oxidoreductase</keyword>
<gene>
    <name type="primary">aldA</name>
    <name type="ordered locus">MW0142</name>
</gene>
<evidence type="ECO:0000250" key="1"/>
<evidence type="ECO:0000305" key="2"/>
<sequence>MAVNVRDYIAENYGLFINGEFVKGSSDETIEVTNPATGETLSHITRAKDKDVDHAVKVAQEAFESWSLTSKSERAQMLRDIGDKLMAQKDKIAMIETLNNGKPIRETTAIDIPFAARHFHYFASVIETEEGTVNDIDKDTMSIVRHEPIGVVGAVVAWNFPMLLAAWKIAPAIAAGNTIVIQPSSSTPLSLLEVAKIFQEVLPKGVVNILTGKGSESGNAIFNHDGVDKLSFTGSTDVGYQVAEAAAKHLVPATLELGGKSANIILDDANLDLAVEGIQLGILFNQGEVCSAGSRLLVHEKIYDQLVPRLQEAFSNIKVGDPQDEATQMGSQTGKDQLDKIQSYIDAAKESDAQILAGGHRLTENGLDKGFFFEPTLIAVPDNHHKLAQEEIFGPVLTVIKVKDDQEAIDIANDSEYGLAGGVFSQNITRALNIAKAVRTGRIWINTYNQVPEGAPFGGYKKSGIGRETYKGALSNYQQVKNIYIDTSNALKGLY</sequence>
<name>ALDA_STAAW</name>
<dbReference type="EC" id="1.2.1.3"/>
<dbReference type="EMBL" id="BA000033">
    <property type="protein sequence ID" value="BAB94007.1"/>
    <property type="molecule type" value="Genomic_DNA"/>
</dbReference>
<dbReference type="RefSeq" id="WP_000290397.1">
    <property type="nucleotide sequence ID" value="NC_003923.1"/>
</dbReference>
<dbReference type="SMR" id="Q7A1Y7"/>
<dbReference type="KEGG" id="sam:MW0142"/>
<dbReference type="HOGENOM" id="CLU_005391_0_2_9"/>
<dbReference type="GO" id="GO:0004029">
    <property type="term" value="F:aldehyde dehydrogenase (NAD+) activity"/>
    <property type="evidence" value="ECO:0007669"/>
    <property type="project" value="UniProtKB-EC"/>
</dbReference>
<dbReference type="CDD" id="cd07117">
    <property type="entry name" value="ALDH_StaphAldA1"/>
    <property type="match status" value="1"/>
</dbReference>
<dbReference type="FunFam" id="3.40.309.10:FF:000012">
    <property type="entry name" value="Betaine aldehyde dehydrogenase"/>
    <property type="match status" value="1"/>
</dbReference>
<dbReference type="FunFam" id="3.40.605.10:FF:000007">
    <property type="entry name" value="NAD/NADP-dependent betaine aldehyde dehydrogenase"/>
    <property type="match status" value="1"/>
</dbReference>
<dbReference type="Gene3D" id="3.40.605.10">
    <property type="entry name" value="Aldehyde Dehydrogenase, Chain A, domain 1"/>
    <property type="match status" value="1"/>
</dbReference>
<dbReference type="Gene3D" id="3.40.309.10">
    <property type="entry name" value="Aldehyde Dehydrogenase, Chain A, domain 2"/>
    <property type="match status" value="1"/>
</dbReference>
<dbReference type="InterPro" id="IPR016161">
    <property type="entry name" value="Ald_DH/histidinol_DH"/>
</dbReference>
<dbReference type="InterPro" id="IPR016163">
    <property type="entry name" value="Ald_DH_C"/>
</dbReference>
<dbReference type="InterPro" id="IPR016160">
    <property type="entry name" value="Ald_DH_CS_CYS"/>
</dbReference>
<dbReference type="InterPro" id="IPR029510">
    <property type="entry name" value="Ald_DH_CS_GLU"/>
</dbReference>
<dbReference type="InterPro" id="IPR016162">
    <property type="entry name" value="Ald_DH_N"/>
</dbReference>
<dbReference type="InterPro" id="IPR015590">
    <property type="entry name" value="Aldehyde_DH_dom"/>
</dbReference>
<dbReference type="PANTHER" id="PTHR43111">
    <property type="entry name" value="ALDEHYDE DEHYDROGENASE B-RELATED"/>
    <property type="match status" value="1"/>
</dbReference>
<dbReference type="PANTHER" id="PTHR43111:SF1">
    <property type="entry name" value="ALDEHYDE DEHYDROGENASE B-RELATED"/>
    <property type="match status" value="1"/>
</dbReference>
<dbReference type="Pfam" id="PF00171">
    <property type="entry name" value="Aldedh"/>
    <property type="match status" value="1"/>
</dbReference>
<dbReference type="SUPFAM" id="SSF53720">
    <property type="entry name" value="ALDH-like"/>
    <property type="match status" value="1"/>
</dbReference>
<dbReference type="PROSITE" id="PS00070">
    <property type="entry name" value="ALDEHYDE_DEHYDR_CYS"/>
    <property type="match status" value="1"/>
</dbReference>
<dbReference type="PROSITE" id="PS00687">
    <property type="entry name" value="ALDEHYDE_DEHYDR_GLU"/>
    <property type="match status" value="1"/>
</dbReference>
<protein>
    <recommendedName>
        <fullName>Putative aldehyde dehydrogenase AldA</fullName>
        <ecNumber>1.2.1.3</ecNumber>
    </recommendedName>
</protein>
<reference key="1">
    <citation type="journal article" date="2002" name="Lancet">
        <title>Genome and virulence determinants of high virulence community-acquired MRSA.</title>
        <authorList>
            <person name="Baba T."/>
            <person name="Takeuchi F."/>
            <person name="Kuroda M."/>
            <person name="Yuzawa H."/>
            <person name="Aoki K."/>
            <person name="Oguchi A."/>
            <person name="Nagai Y."/>
            <person name="Iwama N."/>
            <person name="Asano K."/>
            <person name="Naimi T."/>
            <person name="Kuroda H."/>
            <person name="Cui L."/>
            <person name="Yamamoto K."/>
            <person name="Hiramatsu K."/>
        </authorList>
    </citation>
    <scope>NUCLEOTIDE SEQUENCE [LARGE SCALE GENOMIC DNA]</scope>
    <source>
        <strain>MW2</strain>
    </source>
</reference>
<feature type="chain" id="PRO_0000056460" description="Putative aldehyde dehydrogenase AldA">
    <location>
        <begin position="1"/>
        <end position="495"/>
    </location>
</feature>
<feature type="active site" evidence="1">
    <location>
        <position position="256"/>
    </location>
</feature>
<feature type="active site" evidence="1">
    <location>
        <position position="290"/>
    </location>
</feature>
<feature type="binding site" evidence="1">
    <location>
        <begin position="212"/>
        <end position="218"/>
    </location>
    <ligand>
        <name>NAD(+)</name>
        <dbReference type="ChEBI" id="CHEBI:57540"/>
    </ligand>
</feature>
<comment type="catalytic activity">
    <reaction>
        <text>an aldehyde + NAD(+) + H2O = a carboxylate + NADH + 2 H(+)</text>
        <dbReference type="Rhea" id="RHEA:16185"/>
        <dbReference type="ChEBI" id="CHEBI:15377"/>
        <dbReference type="ChEBI" id="CHEBI:15378"/>
        <dbReference type="ChEBI" id="CHEBI:17478"/>
        <dbReference type="ChEBI" id="CHEBI:29067"/>
        <dbReference type="ChEBI" id="CHEBI:57540"/>
        <dbReference type="ChEBI" id="CHEBI:57945"/>
        <dbReference type="EC" id="1.2.1.3"/>
    </reaction>
</comment>
<comment type="similarity">
    <text evidence="2">Belongs to the aldehyde dehydrogenase family.</text>
</comment>
<organism>
    <name type="scientific">Staphylococcus aureus (strain MW2)</name>
    <dbReference type="NCBI Taxonomy" id="196620"/>
    <lineage>
        <taxon>Bacteria</taxon>
        <taxon>Bacillati</taxon>
        <taxon>Bacillota</taxon>
        <taxon>Bacilli</taxon>
        <taxon>Bacillales</taxon>
        <taxon>Staphylococcaceae</taxon>
        <taxon>Staphylococcus</taxon>
    </lineage>
</organism>